<organism>
    <name type="scientific">Salmonella typhimurium (strain LT2 / SGSC1412 / ATCC 700720)</name>
    <dbReference type="NCBI Taxonomy" id="99287"/>
    <lineage>
        <taxon>Bacteria</taxon>
        <taxon>Pseudomonadati</taxon>
        <taxon>Pseudomonadota</taxon>
        <taxon>Gammaproteobacteria</taxon>
        <taxon>Enterobacterales</taxon>
        <taxon>Enterobacteriaceae</taxon>
        <taxon>Salmonella</taxon>
    </lineage>
</organism>
<keyword id="KW-0963">Cytoplasm</keyword>
<keyword id="KW-0413">Isomerase</keyword>
<keyword id="KW-1185">Reference proteome</keyword>
<keyword id="KW-0694">RNA-binding</keyword>
<keyword id="KW-0698">rRNA processing</keyword>
<evidence type="ECO:0000250" key="1"/>
<evidence type="ECO:0000250" key="2">
    <source>
        <dbReference type="UniProtKB" id="P33643"/>
    </source>
</evidence>
<evidence type="ECO:0000255" key="3">
    <source>
        <dbReference type="PROSITE-ProRule" id="PRU00182"/>
    </source>
</evidence>
<evidence type="ECO:0000256" key="4">
    <source>
        <dbReference type="SAM" id="MobiDB-lite"/>
    </source>
</evidence>
<evidence type="ECO:0000269" key="5">
    <source>
    </source>
</evidence>
<evidence type="ECO:0000305" key="6"/>
<gene>
    <name type="primary">rluD</name>
    <name type="synonym">sfhB</name>
    <name type="ordered locus">STM2662</name>
</gene>
<dbReference type="EC" id="5.4.99.23" evidence="2"/>
<dbReference type="EMBL" id="AE006468">
    <property type="protein sequence ID" value="AAL21552.1"/>
    <property type="molecule type" value="Genomic_DNA"/>
</dbReference>
<dbReference type="RefSeq" id="NP_461593.1">
    <property type="nucleotide sequence ID" value="NC_003197.2"/>
</dbReference>
<dbReference type="RefSeq" id="WP_000079130.1">
    <property type="nucleotide sequence ID" value="NC_003197.2"/>
</dbReference>
<dbReference type="SMR" id="P65836"/>
<dbReference type="STRING" id="99287.STM2662"/>
<dbReference type="PaxDb" id="99287-STM2662"/>
<dbReference type="GeneID" id="1254185"/>
<dbReference type="KEGG" id="stm:STM2662"/>
<dbReference type="PATRIC" id="fig|99287.12.peg.2808"/>
<dbReference type="HOGENOM" id="CLU_016902_4_0_6"/>
<dbReference type="OMA" id="KSERAYT"/>
<dbReference type="PhylomeDB" id="P65836"/>
<dbReference type="BioCyc" id="SENT99287:STM2662-MONOMER"/>
<dbReference type="Proteomes" id="UP000001014">
    <property type="component" value="Chromosome"/>
</dbReference>
<dbReference type="GO" id="GO:0005737">
    <property type="term" value="C:cytoplasm"/>
    <property type="evidence" value="ECO:0007669"/>
    <property type="project" value="UniProtKB-SubCell"/>
</dbReference>
<dbReference type="GO" id="GO:0160140">
    <property type="term" value="F:23S rRNA pseudouridine(1911/1915/1917) synthase activity"/>
    <property type="evidence" value="ECO:0007669"/>
    <property type="project" value="UniProtKB-EC"/>
</dbReference>
<dbReference type="GO" id="GO:0009982">
    <property type="term" value="F:pseudouridine synthase activity"/>
    <property type="evidence" value="ECO:0000318"/>
    <property type="project" value="GO_Central"/>
</dbReference>
<dbReference type="GO" id="GO:0003723">
    <property type="term" value="F:RNA binding"/>
    <property type="evidence" value="ECO:0007669"/>
    <property type="project" value="UniProtKB-KW"/>
</dbReference>
<dbReference type="GO" id="GO:0000455">
    <property type="term" value="P:enzyme-directed rRNA pseudouridine synthesis"/>
    <property type="evidence" value="ECO:0000318"/>
    <property type="project" value="GO_Central"/>
</dbReference>
<dbReference type="CDD" id="cd02869">
    <property type="entry name" value="PseudoU_synth_RluA_like"/>
    <property type="match status" value="1"/>
</dbReference>
<dbReference type="CDD" id="cd00165">
    <property type="entry name" value="S4"/>
    <property type="match status" value="1"/>
</dbReference>
<dbReference type="FunFam" id="3.10.290.10:FF:000011">
    <property type="entry name" value="Pseudouridine synthase"/>
    <property type="match status" value="1"/>
</dbReference>
<dbReference type="FunFam" id="3.30.2350.10:FF:000004">
    <property type="entry name" value="Pseudouridine synthase"/>
    <property type="match status" value="1"/>
</dbReference>
<dbReference type="Gene3D" id="6.10.140.230">
    <property type="match status" value="1"/>
</dbReference>
<dbReference type="Gene3D" id="3.30.2350.10">
    <property type="entry name" value="Pseudouridine synthase"/>
    <property type="match status" value="1"/>
</dbReference>
<dbReference type="Gene3D" id="3.10.290.10">
    <property type="entry name" value="RNA-binding S4 domain"/>
    <property type="match status" value="1"/>
</dbReference>
<dbReference type="InterPro" id="IPR020103">
    <property type="entry name" value="PsdUridine_synth_cat_dom_sf"/>
</dbReference>
<dbReference type="InterPro" id="IPR006224">
    <property type="entry name" value="PsdUridine_synth_RluA-like_CS"/>
</dbReference>
<dbReference type="InterPro" id="IPR006225">
    <property type="entry name" value="PsdUridine_synth_RluC/D"/>
</dbReference>
<dbReference type="InterPro" id="IPR006145">
    <property type="entry name" value="PsdUridine_synth_RsuA/RluA"/>
</dbReference>
<dbReference type="InterPro" id="IPR050188">
    <property type="entry name" value="RluA_PseudoU_synthase"/>
</dbReference>
<dbReference type="InterPro" id="IPR002942">
    <property type="entry name" value="S4_RNA-bd"/>
</dbReference>
<dbReference type="InterPro" id="IPR036986">
    <property type="entry name" value="S4_RNA-bd_sf"/>
</dbReference>
<dbReference type="NCBIfam" id="NF008385">
    <property type="entry name" value="PRK11180.1"/>
    <property type="match status" value="1"/>
</dbReference>
<dbReference type="NCBIfam" id="TIGR00005">
    <property type="entry name" value="rluA_subfam"/>
    <property type="match status" value="1"/>
</dbReference>
<dbReference type="PANTHER" id="PTHR21600">
    <property type="entry name" value="MITOCHONDRIAL RNA PSEUDOURIDINE SYNTHASE"/>
    <property type="match status" value="1"/>
</dbReference>
<dbReference type="PANTHER" id="PTHR21600:SF44">
    <property type="entry name" value="RIBOSOMAL LARGE SUBUNIT PSEUDOURIDINE SYNTHASE D"/>
    <property type="match status" value="1"/>
</dbReference>
<dbReference type="Pfam" id="PF00849">
    <property type="entry name" value="PseudoU_synth_2"/>
    <property type="match status" value="1"/>
</dbReference>
<dbReference type="Pfam" id="PF01479">
    <property type="entry name" value="S4"/>
    <property type="match status" value="1"/>
</dbReference>
<dbReference type="SMART" id="SM00363">
    <property type="entry name" value="S4"/>
    <property type="match status" value="1"/>
</dbReference>
<dbReference type="SUPFAM" id="SSF55174">
    <property type="entry name" value="Alpha-L RNA-binding motif"/>
    <property type="match status" value="1"/>
</dbReference>
<dbReference type="SUPFAM" id="SSF55120">
    <property type="entry name" value="Pseudouridine synthase"/>
    <property type="match status" value="1"/>
</dbReference>
<dbReference type="PROSITE" id="PS01129">
    <property type="entry name" value="PSI_RLU"/>
    <property type="match status" value="1"/>
</dbReference>
<dbReference type="PROSITE" id="PS50889">
    <property type="entry name" value="S4"/>
    <property type="match status" value="1"/>
</dbReference>
<comment type="function">
    <text evidence="2">Responsible for synthesis of pseudouridine from uracil at positions 1911, 1915 and 1917 in 23S ribosomal RNA.</text>
</comment>
<comment type="catalytic activity">
    <reaction evidence="2">
        <text>uridine(1911/1915/1917) in 23S rRNA = pseudouridine(1911/1915/1917) in 23S rRNA</text>
        <dbReference type="Rhea" id="RHEA:42524"/>
        <dbReference type="Rhea" id="RHEA-COMP:10097"/>
        <dbReference type="Rhea" id="RHEA-COMP:10098"/>
        <dbReference type="ChEBI" id="CHEBI:65314"/>
        <dbReference type="ChEBI" id="CHEBI:65315"/>
        <dbReference type="EC" id="5.4.99.23"/>
    </reaction>
</comment>
<comment type="subunit">
    <text evidence="5">Binds ObgE/YhbZ (AC Q8ZLS5) (PubMed:17905831).</text>
</comment>
<comment type="subcellular location">
    <subcellularLocation>
        <location evidence="2">Cytoplasm</location>
    </subcellularLocation>
    <text evidence="2">Associates with late stage pre-50S ribosomal subunits.</text>
</comment>
<comment type="similarity">
    <text evidence="6">Belongs to the pseudouridine synthase RluA family.</text>
</comment>
<accession>P65836</accession>
<accession>Q8XGG2</accession>
<feature type="initiator methionine" description="Removed" evidence="1">
    <location>
        <position position="1"/>
    </location>
</feature>
<feature type="chain" id="PRO_0000162699" description="Ribosomal large subunit pseudouridine synthase D">
    <location>
        <begin position="2"/>
        <end position="326"/>
    </location>
</feature>
<feature type="domain" description="S4 RNA-binding" evidence="3">
    <location>
        <begin position="18"/>
        <end position="91"/>
    </location>
</feature>
<feature type="region of interest" description="Disordered" evidence="4">
    <location>
        <begin position="183"/>
        <end position="203"/>
    </location>
</feature>
<feature type="active site" evidence="1">
    <location>
        <position position="139"/>
    </location>
</feature>
<sequence>MAQRVQLTATVSENQLGQRLDQALAEMFPDYSRSRIKEWILNQRVLVNGQLCDKPKEKVLGGERVAIDAEIDEEIRFEAQDIPLDIVYEDDDILVINKPRDLVVHPGAGNPDGTVLNALLHYYPPIADVPRAGIVHRLDKDTTGLMVVAKTVPAQTRLVESLQLREITREYEAVAIGHMTAGGTVNEPISRHPTKRTHMSVHPMGKPAVTHYRIMEHFRVHTRLRLRLETGRTHQIRVHMAHITHPLVGDQVYGGRPRPPKGASEEFISTLRKFDRQALHATMLRLYHPVSGIEMEWHAPIPQDMVDLIDAMRADFEDHKDDVDWL</sequence>
<reference key="1">
    <citation type="journal article" date="2001" name="Nature">
        <title>Complete genome sequence of Salmonella enterica serovar Typhimurium LT2.</title>
        <authorList>
            <person name="McClelland M."/>
            <person name="Sanderson K.E."/>
            <person name="Spieth J."/>
            <person name="Clifton S.W."/>
            <person name="Latreille P."/>
            <person name="Courtney L."/>
            <person name="Porwollik S."/>
            <person name="Ali J."/>
            <person name="Dante M."/>
            <person name="Du F."/>
            <person name="Hou S."/>
            <person name="Layman D."/>
            <person name="Leonard S."/>
            <person name="Nguyen C."/>
            <person name="Scott K."/>
            <person name="Holmes A."/>
            <person name="Grewal N."/>
            <person name="Mulvaney E."/>
            <person name="Ryan E."/>
            <person name="Sun H."/>
            <person name="Florea L."/>
            <person name="Miller W."/>
            <person name="Stoneking T."/>
            <person name="Nhan M."/>
            <person name="Waterston R."/>
            <person name="Wilson R.K."/>
        </authorList>
    </citation>
    <scope>NUCLEOTIDE SEQUENCE [LARGE SCALE GENOMIC DNA]</scope>
    <source>
        <strain>LT2 / SGSC1412 / ATCC 700720</strain>
    </source>
</reference>
<reference key="2">
    <citation type="journal article" date="2007" name="Protein Sci.">
        <title>Functional analysis of the GTPases EngA and YhbZ encoded by Salmonella typhimurium.</title>
        <authorList>
            <person name="Lamb H.K."/>
            <person name="Thompson P."/>
            <person name="Elliott C."/>
            <person name="Charles I.G."/>
            <person name="Richards J."/>
            <person name="Lockyer M."/>
            <person name="Watkins N."/>
            <person name="Nichols C."/>
            <person name="Stammers D.K."/>
            <person name="Bagshaw C.R."/>
            <person name="Cooper A."/>
            <person name="Hawkins A.R."/>
        </authorList>
    </citation>
    <scope>IDENTIFICATION BY MASS SPECTROMETRY</scope>
    <scope>INTERACTION WITH OBGE/YHBZ</scope>
    <source>
        <strain>FIRN / SL3261</strain>
    </source>
</reference>
<proteinExistence type="evidence at protein level"/>
<name>RLUD_SALTY</name>
<protein>
    <recommendedName>
        <fullName evidence="2">Ribosomal large subunit pseudouridine synthase D</fullName>
        <ecNumber evidence="2">5.4.99.23</ecNumber>
    </recommendedName>
    <alternativeName>
        <fullName>23S rRNA pseudouridine(1911/1915/1917) synthase</fullName>
    </alternativeName>
    <alternativeName>
        <fullName>rRNA pseudouridylate synthase D</fullName>
    </alternativeName>
    <alternativeName>
        <fullName>rRNA-uridine isomerase D</fullName>
    </alternativeName>
</protein>